<evidence type="ECO:0000269" key="1">
    <source>
    </source>
</evidence>
<evidence type="ECO:0000303" key="2">
    <source>
    </source>
</evidence>
<evidence type="ECO:0000303" key="3">
    <source>
    </source>
</evidence>
<evidence type="ECO:0000305" key="4"/>
<evidence type="ECO:0000305" key="5">
    <source>
    </source>
</evidence>
<protein>
    <recommendedName>
        <fullName evidence="3">M-poneritoxin-Ng1c</fullName>
        <shortName evidence="3">M-PONTX-Ng1c</shortName>
    </recommendedName>
    <alternativeName>
        <fullName evidence="4">Poneratoxin</fullName>
    </alternativeName>
    <alternativeName>
        <fullName evidence="2">Ponericin-W3</fullName>
    </alternativeName>
</protein>
<organism>
    <name type="scientific">Neoponera goeldii</name>
    <name type="common">Ponerine ant</name>
    <name type="synonym">Pachycondyla goeldii</name>
    <dbReference type="NCBI Taxonomy" id="3057131"/>
    <lineage>
        <taxon>Eukaryota</taxon>
        <taxon>Metazoa</taxon>
        <taxon>Ecdysozoa</taxon>
        <taxon>Arthropoda</taxon>
        <taxon>Hexapoda</taxon>
        <taxon>Insecta</taxon>
        <taxon>Pterygota</taxon>
        <taxon>Neoptera</taxon>
        <taxon>Endopterygota</taxon>
        <taxon>Hymenoptera</taxon>
        <taxon>Apocrita</taxon>
        <taxon>Aculeata</taxon>
        <taxon>Formicoidea</taxon>
        <taxon>Formicidae</taxon>
        <taxon>Ponerinae</taxon>
        <taxon>Ponerini</taxon>
        <taxon>Neoponera</taxon>
    </lineage>
</organism>
<comment type="function">
    <text evidence="1">Has a broad spectrum of activity against both Gram-positive and Gram-negative bacteria and S.cerevisiae. Has insecticidal and hemolytic activities. May act by disrupting the integrity of the bacterial cell membrane.</text>
</comment>
<comment type="subcellular location">
    <subcellularLocation>
        <location evidence="1">Secreted</location>
    </subcellularLocation>
    <subcellularLocation>
        <location>Target cell membrane</location>
    </subcellularLocation>
</comment>
<comment type="tissue specificity">
    <text evidence="5">Expressed by the venom gland.</text>
</comment>
<comment type="mass spectrometry"/>
<comment type="similarity">
    <text evidence="4">Belongs to the non-disulfide-bridged peptide (NDBP) superfamily. Medium-length antimicrobial peptide (group 3) family. Ponericin-W subfamily.</text>
</comment>
<keyword id="KW-0044">Antibiotic</keyword>
<keyword id="KW-0929">Antimicrobial</keyword>
<keyword id="KW-0204">Cytolysis</keyword>
<keyword id="KW-0903">Direct protein sequencing</keyword>
<keyword id="KW-0295">Fungicide</keyword>
<keyword id="KW-0354">Hemolysis</keyword>
<keyword id="KW-0472">Membrane</keyword>
<keyword id="KW-0964">Secreted</keyword>
<keyword id="KW-1052">Target cell membrane</keyword>
<keyword id="KW-1053">Target membrane</keyword>
<keyword id="KW-0800">Toxin</keyword>
<reference key="1">
    <citation type="journal article" date="2001" name="J. Biol. Chem.">
        <title>Ponericins, new antibacterial and insecticidal peptides from the venom of the ant Pachycondyla goeldii.</title>
        <authorList>
            <person name="Orivel J."/>
            <person name="Redeker V."/>
            <person name="Le Caer J.-P."/>
            <person name="Krier F."/>
            <person name="Revol-Junelles A.-M."/>
            <person name="Longeon A."/>
            <person name="Chafotte A."/>
            <person name="Dejean A."/>
            <person name="Rossier J."/>
        </authorList>
    </citation>
    <scope>PROTEIN SEQUENCE</scope>
    <scope>FUNCTION</scope>
    <scope>MASS SPECTROMETRY</scope>
    <scope>SUBCELLULAR LOCATION</scope>
    <source>
        <tissue>Venom</tissue>
    </source>
</reference>
<reference key="2">
    <citation type="journal article" date="2016" name="Toxins">
        <title>The biochemical toxin arsenal from ant venoms.</title>
        <authorList>
            <person name="Touchard A."/>
            <person name="Aili S.R."/>
            <person name="Fox E.G."/>
            <person name="Escoubas P."/>
            <person name="Orivel J."/>
            <person name="Nicholson G.M."/>
            <person name="Dejean A."/>
        </authorList>
    </citation>
    <scope>REVIEW</scope>
    <scope>NOMENCLATURE</scope>
</reference>
<proteinExistence type="evidence at protein level"/>
<accession>P82425</accession>
<dbReference type="GO" id="GO:0005576">
    <property type="term" value="C:extracellular region"/>
    <property type="evidence" value="ECO:0007669"/>
    <property type="project" value="UniProtKB-SubCell"/>
</dbReference>
<dbReference type="GO" id="GO:0016020">
    <property type="term" value="C:membrane"/>
    <property type="evidence" value="ECO:0007669"/>
    <property type="project" value="UniProtKB-KW"/>
</dbReference>
<dbReference type="GO" id="GO:0044218">
    <property type="term" value="C:other organism cell membrane"/>
    <property type="evidence" value="ECO:0007669"/>
    <property type="project" value="UniProtKB-KW"/>
</dbReference>
<dbReference type="GO" id="GO:0090729">
    <property type="term" value="F:toxin activity"/>
    <property type="evidence" value="ECO:0007669"/>
    <property type="project" value="UniProtKB-KW"/>
</dbReference>
<dbReference type="GO" id="GO:0042742">
    <property type="term" value="P:defense response to bacterium"/>
    <property type="evidence" value="ECO:0007669"/>
    <property type="project" value="UniProtKB-KW"/>
</dbReference>
<dbReference type="GO" id="GO:0050832">
    <property type="term" value="P:defense response to fungus"/>
    <property type="evidence" value="ECO:0007669"/>
    <property type="project" value="UniProtKB-KW"/>
</dbReference>
<dbReference type="GO" id="GO:0031640">
    <property type="term" value="P:killing of cells of another organism"/>
    <property type="evidence" value="ECO:0007669"/>
    <property type="project" value="UniProtKB-KW"/>
</dbReference>
<dbReference type="InterPro" id="IPR012523">
    <property type="entry name" value="Antimicrobial_4"/>
</dbReference>
<dbReference type="Pfam" id="PF08024">
    <property type="entry name" value="Antimicrobial_4"/>
    <property type="match status" value="1"/>
</dbReference>
<feature type="peptide" id="PRO_0000044196" description="M-poneritoxin-Ng1c" evidence="1">
    <location>
        <begin position="1"/>
        <end position="26"/>
    </location>
</feature>
<name>WTX1C_NEOGO</name>
<sequence>GIWGTLAKIGIKAVPRVISMLKKKKQ</sequence>